<reference key="1">
    <citation type="journal article" date="2015" name="Genome Announc.">
        <title>Complete genome sequence of Anaeromyxobacter sp. Fw109-5, an anaerobic, metal-reducing bacterium isolated from a contaminated subsurface environment.</title>
        <authorList>
            <person name="Hwang C."/>
            <person name="Copeland A."/>
            <person name="Lucas S."/>
            <person name="Lapidus A."/>
            <person name="Barry K."/>
            <person name="Glavina Del Rio T."/>
            <person name="Dalin E."/>
            <person name="Tice H."/>
            <person name="Pitluck S."/>
            <person name="Sims D."/>
            <person name="Brettin T."/>
            <person name="Bruce D.C."/>
            <person name="Detter J.C."/>
            <person name="Han C.S."/>
            <person name="Schmutz J."/>
            <person name="Larimer F.W."/>
            <person name="Land M.L."/>
            <person name="Hauser L.J."/>
            <person name="Kyrpides N."/>
            <person name="Lykidis A."/>
            <person name="Richardson P."/>
            <person name="Belieav A."/>
            <person name="Sanford R.A."/>
            <person name="Loeffler F.E."/>
            <person name="Fields M.W."/>
        </authorList>
    </citation>
    <scope>NUCLEOTIDE SEQUENCE [LARGE SCALE GENOMIC DNA]</scope>
    <source>
        <strain>Fw109-5</strain>
    </source>
</reference>
<organism>
    <name type="scientific">Anaeromyxobacter sp. (strain Fw109-5)</name>
    <dbReference type="NCBI Taxonomy" id="404589"/>
    <lineage>
        <taxon>Bacteria</taxon>
        <taxon>Pseudomonadati</taxon>
        <taxon>Myxococcota</taxon>
        <taxon>Myxococcia</taxon>
        <taxon>Myxococcales</taxon>
        <taxon>Cystobacterineae</taxon>
        <taxon>Anaeromyxobacteraceae</taxon>
        <taxon>Anaeromyxobacter</taxon>
    </lineage>
</organism>
<proteinExistence type="inferred from homology"/>
<name>RUVB_ANADF</name>
<feature type="chain" id="PRO_0000322780" description="Holliday junction branch migration complex subunit RuvB">
    <location>
        <begin position="1"/>
        <end position="342"/>
    </location>
</feature>
<feature type="region of interest" description="Large ATPase domain (RuvB-L)" evidence="1">
    <location>
        <begin position="1"/>
        <end position="185"/>
    </location>
</feature>
<feature type="region of interest" description="Disordered" evidence="2">
    <location>
        <begin position="1"/>
        <end position="22"/>
    </location>
</feature>
<feature type="region of interest" description="Small ATPAse domain (RuvB-S)" evidence="1">
    <location>
        <begin position="186"/>
        <end position="256"/>
    </location>
</feature>
<feature type="region of interest" description="Head domain (RuvB-H)" evidence="1">
    <location>
        <begin position="259"/>
        <end position="342"/>
    </location>
</feature>
<feature type="binding site" evidence="1">
    <location>
        <position position="24"/>
    </location>
    <ligand>
        <name>ATP</name>
        <dbReference type="ChEBI" id="CHEBI:30616"/>
    </ligand>
</feature>
<feature type="binding site" evidence="1">
    <location>
        <position position="25"/>
    </location>
    <ligand>
        <name>ATP</name>
        <dbReference type="ChEBI" id="CHEBI:30616"/>
    </ligand>
</feature>
<feature type="binding site" evidence="1">
    <location>
        <position position="66"/>
    </location>
    <ligand>
        <name>ATP</name>
        <dbReference type="ChEBI" id="CHEBI:30616"/>
    </ligand>
</feature>
<feature type="binding site" evidence="1">
    <location>
        <position position="69"/>
    </location>
    <ligand>
        <name>ATP</name>
        <dbReference type="ChEBI" id="CHEBI:30616"/>
    </ligand>
</feature>
<feature type="binding site" evidence="1">
    <location>
        <position position="70"/>
    </location>
    <ligand>
        <name>ATP</name>
        <dbReference type="ChEBI" id="CHEBI:30616"/>
    </ligand>
</feature>
<feature type="binding site" evidence="1">
    <location>
        <position position="70"/>
    </location>
    <ligand>
        <name>Mg(2+)</name>
        <dbReference type="ChEBI" id="CHEBI:18420"/>
    </ligand>
</feature>
<feature type="binding site" evidence="1">
    <location>
        <position position="71"/>
    </location>
    <ligand>
        <name>ATP</name>
        <dbReference type="ChEBI" id="CHEBI:30616"/>
    </ligand>
</feature>
<feature type="binding site" evidence="1">
    <location>
        <begin position="132"/>
        <end position="134"/>
    </location>
    <ligand>
        <name>ATP</name>
        <dbReference type="ChEBI" id="CHEBI:30616"/>
    </ligand>
</feature>
<feature type="binding site" evidence="1">
    <location>
        <position position="175"/>
    </location>
    <ligand>
        <name>ATP</name>
        <dbReference type="ChEBI" id="CHEBI:30616"/>
    </ligand>
</feature>
<feature type="binding site" evidence="1">
    <location>
        <position position="185"/>
    </location>
    <ligand>
        <name>ATP</name>
        <dbReference type="ChEBI" id="CHEBI:30616"/>
    </ligand>
</feature>
<feature type="binding site" evidence="1">
    <location>
        <position position="222"/>
    </location>
    <ligand>
        <name>ATP</name>
        <dbReference type="ChEBI" id="CHEBI:30616"/>
    </ligand>
</feature>
<feature type="binding site" evidence="1">
    <location>
        <position position="295"/>
    </location>
    <ligand>
        <name>DNA</name>
        <dbReference type="ChEBI" id="CHEBI:16991"/>
    </ligand>
</feature>
<feature type="binding site" evidence="1">
    <location>
        <position position="314"/>
    </location>
    <ligand>
        <name>DNA</name>
        <dbReference type="ChEBI" id="CHEBI:16991"/>
    </ligand>
</feature>
<feature type="binding site" evidence="1">
    <location>
        <position position="319"/>
    </location>
    <ligand>
        <name>DNA</name>
        <dbReference type="ChEBI" id="CHEBI:16991"/>
    </ligand>
</feature>
<dbReference type="EC" id="3.6.4.-" evidence="1"/>
<dbReference type="EMBL" id="CP000769">
    <property type="protein sequence ID" value="ABS25206.1"/>
    <property type="molecule type" value="Genomic_DNA"/>
</dbReference>
<dbReference type="RefSeq" id="WP_011985312.1">
    <property type="nucleotide sequence ID" value="NC_009675.1"/>
</dbReference>
<dbReference type="SMR" id="A7H910"/>
<dbReference type="STRING" id="404589.Anae109_0997"/>
<dbReference type="KEGG" id="afw:Anae109_0997"/>
<dbReference type="eggNOG" id="COG2255">
    <property type="taxonomic scope" value="Bacteria"/>
</dbReference>
<dbReference type="HOGENOM" id="CLU_055599_1_0_7"/>
<dbReference type="OrthoDB" id="9804478at2"/>
<dbReference type="Proteomes" id="UP000006382">
    <property type="component" value="Chromosome"/>
</dbReference>
<dbReference type="GO" id="GO:0005737">
    <property type="term" value="C:cytoplasm"/>
    <property type="evidence" value="ECO:0007669"/>
    <property type="project" value="UniProtKB-SubCell"/>
</dbReference>
<dbReference type="GO" id="GO:0048476">
    <property type="term" value="C:Holliday junction resolvase complex"/>
    <property type="evidence" value="ECO:0007669"/>
    <property type="project" value="UniProtKB-UniRule"/>
</dbReference>
<dbReference type="GO" id="GO:0005524">
    <property type="term" value="F:ATP binding"/>
    <property type="evidence" value="ECO:0007669"/>
    <property type="project" value="UniProtKB-UniRule"/>
</dbReference>
<dbReference type="GO" id="GO:0016887">
    <property type="term" value="F:ATP hydrolysis activity"/>
    <property type="evidence" value="ECO:0007669"/>
    <property type="project" value="InterPro"/>
</dbReference>
<dbReference type="GO" id="GO:0000400">
    <property type="term" value="F:four-way junction DNA binding"/>
    <property type="evidence" value="ECO:0007669"/>
    <property type="project" value="UniProtKB-UniRule"/>
</dbReference>
<dbReference type="GO" id="GO:0009378">
    <property type="term" value="F:four-way junction helicase activity"/>
    <property type="evidence" value="ECO:0007669"/>
    <property type="project" value="InterPro"/>
</dbReference>
<dbReference type="GO" id="GO:0006310">
    <property type="term" value="P:DNA recombination"/>
    <property type="evidence" value="ECO:0007669"/>
    <property type="project" value="UniProtKB-UniRule"/>
</dbReference>
<dbReference type="GO" id="GO:0006281">
    <property type="term" value="P:DNA repair"/>
    <property type="evidence" value="ECO:0007669"/>
    <property type="project" value="UniProtKB-UniRule"/>
</dbReference>
<dbReference type="CDD" id="cd00009">
    <property type="entry name" value="AAA"/>
    <property type="match status" value="1"/>
</dbReference>
<dbReference type="Gene3D" id="1.10.8.60">
    <property type="match status" value="1"/>
</dbReference>
<dbReference type="Gene3D" id="3.40.50.300">
    <property type="entry name" value="P-loop containing nucleotide triphosphate hydrolases"/>
    <property type="match status" value="1"/>
</dbReference>
<dbReference type="Gene3D" id="1.10.10.10">
    <property type="entry name" value="Winged helix-like DNA-binding domain superfamily/Winged helix DNA-binding domain"/>
    <property type="match status" value="1"/>
</dbReference>
<dbReference type="HAMAP" id="MF_00016">
    <property type="entry name" value="DNA_HJ_migration_RuvB"/>
    <property type="match status" value="1"/>
</dbReference>
<dbReference type="InterPro" id="IPR003593">
    <property type="entry name" value="AAA+_ATPase"/>
</dbReference>
<dbReference type="InterPro" id="IPR041445">
    <property type="entry name" value="AAA_lid_4"/>
</dbReference>
<dbReference type="InterPro" id="IPR004605">
    <property type="entry name" value="DNA_helicase_Holl-junc_RuvB"/>
</dbReference>
<dbReference type="InterPro" id="IPR027417">
    <property type="entry name" value="P-loop_NTPase"/>
</dbReference>
<dbReference type="InterPro" id="IPR008824">
    <property type="entry name" value="RuvB-like_N"/>
</dbReference>
<dbReference type="InterPro" id="IPR008823">
    <property type="entry name" value="RuvB_C"/>
</dbReference>
<dbReference type="InterPro" id="IPR036388">
    <property type="entry name" value="WH-like_DNA-bd_sf"/>
</dbReference>
<dbReference type="InterPro" id="IPR036390">
    <property type="entry name" value="WH_DNA-bd_sf"/>
</dbReference>
<dbReference type="NCBIfam" id="NF000868">
    <property type="entry name" value="PRK00080.1"/>
    <property type="match status" value="1"/>
</dbReference>
<dbReference type="NCBIfam" id="TIGR00635">
    <property type="entry name" value="ruvB"/>
    <property type="match status" value="1"/>
</dbReference>
<dbReference type="PANTHER" id="PTHR42848">
    <property type="match status" value="1"/>
</dbReference>
<dbReference type="PANTHER" id="PTHR42848:SF1">
    <property type="entry name" value="HOLLIDAY JUNCTION BRANCH MIGRATION COMPLEX SUBUNIT RUVB"/>
    <property type="match status" value="1"/>
</dbReference>
<dbReference type="Pfam" id="PF17864">
    <property type="entry name" value="AAA_lid_4"/>
    <property type="match status" value="1"/>
</dbReference>
<dbReference type="Pfam" id="PF05491">
    <property type="entry name" value="RuvB_C"/>
    <property type="match status" value="1"/>
</dbReference>
<dbReference type="Pfam" id="PF05496">
    <property type="entry name" value="RuvB_N"/>
    <property type="match status" value="1"/>
</dbReference>
<dbReference type="SMART" id="SM00382">
    <property type="entry name" value="AAA"/>
    <property type="match status" value="1"/>
</dbReference>
<dbReference type="SUPFAM" id="SSF52540">
    <property type="entry name" value="P-loop containing nucleoside triphosphate hydrolases"/>
    <property type="match status" value="1"/>
</dbReference>
<dbReference type="SUPFAM" id="SSF46785">
    <property type="entry name" value="Winged helix' DNA-binding domain"/>
    <property type="match status" value="1"/>
</dbReference>
<comment type="function">
    <text evidence="1">The RuvA-RuvB-RuvC complex processes Holliday junction (HJ) DNA during genetic recombination and DNA repair, while the RuvA-RuvB complex plays an important role in the rescue of blocked DNA replication forks via replication fork reversal (RFR). RuvA specifically binds to HJ cruciform DNA, conferring on it an open structure. The RuvB hexamer acts as an ATP-dependent pump, pulling dsDNA into and through the RuvAB complex. RuvB forms 2 homohexamers on either side of HJ DNA bound by 1 or 2 RuvA tetramers; 4 subunits per hexamer contact DNA at a time. Coordinated motions by a converter formed by DNA-disengaged RuvB subunits stimulates ATP hydrolysis and nucleotide exchange. Immobilization of the converter enables RuvB to convert the ATP-contained energy into a lever motion, pulling 2 nucleotides of DNA out of the RuvA tetramer per ATP hydrolyzed, thus driving DNA branch migration. The RuvB motors rotate together with the DNA substrate, which together with the progressing nucleotide cycle form the mechanistic basis for DNA recombination by continuous HJ branch migration. Branch migration allows RuvC to scan DNA until it finds its consensus sequence, where it cleaves and resolves cruciform DNA.</text>
</comment>
<comment type="catalytic activity">
    <reaction evidence="1">
        <text>ATP + H2O = ADP + phosphate + H(+)</text>
        <dbReference type="Rhea" id="RHEA:13065"/>
        <dbReference type="ChEBI" id="CHEBI:15377"/>
        <dbReference type="ChEBI" id="CHEBI:15378"/>
        <dbReference type="ChEBI" id="CHEBI:30616"/>
        <dbReference type="ChEBI" id="CHEBI:43474"/>
        <dbReference type="ChEBI" id="CHEBI:456216"/>
    </reaction>
</comment>
<comment type="subunit">
    <text evidence="1">Homohexamer. Forms an RuvA(8)-RuvB(12)-Holliday junction (HJ) complex. HJ DNA is sandwiched between 2 RuvA tetramers; dsDNA enters through RuvA and exits via RuvB. An RuvB hexamer assembles on each DNA strand where it exits the tetramer. Each RuvB hexamer is contacted by two RuvA subunits (via domain III) on 2 adjacent RuvB subunits; this complex drives branch migration. In the full resolvosome a probable DNA-RuvA(4)-RuvB(12)-RuvC(2) complex forms which resolves the HJ.</text>
</comment>
<comment type="subcellular location">
    <subcellularLocation>
        <location evidence="1">Cytoplasm</location>
    </subcellularLocation>
</comment>
<comment type="domain">
    <text evidence="1">Has 3 domains, the large (RuvB-L) and small ATPase (RuvB-S) domains and the C-terminal head (RuvB-H) domain. The head domain binds DNA, while the ATPase domains jointly bind ATP, ADP or are empty depending on the state of the subunit in the translocation cycle. During a single DNA translocation step the structure of each domain remains the same, but their relative positions change.</text>
</comment>
<comment type="similarity">
    <text evidence="1">Belongs to the RuvB family.</text>
</comment>
<sequence length="342" mass="37365">MTLKPVREVSPGSQEGEERLEQSLRPATFEEYVGQEKLVENFRVYAKAARARGEALDHVLLSGPPGLGKTSLAHILARELGVALHVTSGPALVKKGDLAGLLTALAPRDILFIDEIHRLSPAVEEALYPAMEDYRFDVVLGAGLGAQTMEMKLERFTLVGATTRTGLLASPLRDRFPIQERLGYYEPTELREIAVRAARKLALPVDPAGAEELARRARGTPRIAIRLLQRARDFAQVEGDGTLTREIVETTLERLEVDGRGLDAMDRRILAVVLDTFGGGPVGIDAVAAAVGEERDTLEDVYEPFLVREGFLARTPRGRVALPPAYAHLGRERPQGKQGSLI</sequence>
<protein>
    <recommendedName>
        <fullName evidence="1">Holliday junction branch migration complex subunit RuvB</fullName>
        <ecNumber evidence="1">3.6.4.-</ecNumber>
    </recommendedName>
</protein>
<gene>
    <name evidence="1" type="primary">ruvB</name>
    <name type="ordered locus">Anae109_0997</name>
</gene>
<keyword id="KW-0067">ATP-binding</keyword>
<keyword id="KW-0963">Cytoplasm</keyword>
<keyword id="KW-0227">DNA damage</keyword>
<keyword id="KW-0233">DNA recombination</keyword>
<keyword id="KW-0234">DNA repair</keyword>
<keyword id="KW-0238">DNA-binding</keyword>
<keyword id="KW-0378">Hydrolase</keyword>
<keyword id="KW-0547">Nucleotide-binding</keyword>
<keyword id="KW-1185">Reference proteome</keyword>
<accession>A7H910</accession>
<evidence type="ECO:0000255" key="1">
    <source>
        <dbReference type="HAMAP-Rule" id="MF_00016"/>
    </source>
</evidence>
<evidence type="ECO:0000256" key="2">
    <source>
        <dbReference type="SAM" id="MobiDB-lite"/>
    </source>
</evidence>